<accession>Q9LDK9</accession>
<dbReference type="EMBL" id="AF216385">
    <property type="protein sequence ID" value="AAF61671.1"/>
    <property type="molecule type" value="mRNA"/>
</dbReference>
<dbReference type="EMBL" id="AL163815">
    <property type="protein sequence ID" value="CAB87709.1"/>
    <property type="molecule type" value="Genomic_DNA"/>
</dbReference>
<dbReference type="EMBL" id="CP002688">
    <property type="protein sequence ID" value="AED91685.1"/>
    <property type="molecule type" value="Genomic_DNA"/>
</dbReference>
<dbReference type="PIR" id="T48508">
    <property type="entry name" value="T48508"/>
</dbReference>
<dbReference type="RefSeq" id="NP_196710.1">
    <molecule id="Q9LDK9-1"/>
    <property type="nucleotide sequence ID" value="NM_121187.4"/>
</dbReference>
<dbReference type="SMR" id="Q9LDK9"/>
<dbReference type="BioGRID" id="16299">
    <property type="interactions" value="2"/>
</dbReference>
<dbReference type="FunCoup" id="Q9LDK9">
    <property type="interactions" value="3170"/>
</dbReference>
<dbReference type="IntAct" id="Q9LDK9">
    <property type="interactions" value="1"/>
</dbReference>
<dbReference type="STRING" id="3702.Q9LDK9"/>
<dbReference type="GlyGen" id="Q9LDK9">
    <property type="glycosylation" value="1 site"/>
</dbReference>
<dbReference type="iPTMnet" id="Q9LDK9"/>
<dbReference type="PaxDb" id="3702-AT5G11490.2"/>
<dbReference type="ProteomicsDB" id="244423">
    <molecule id="Q9LDK9-1"/>
</dbReference>
<dbReference type="EnsemblPlants" id="AT5G11490.1">
    <molecule id="Q9LDK9-1"/>
    <property type="protein sequence ID" value="AT5G11490.1"/>
    <property type="gene ID" value="AT5G11490"/>
</dbReference>
<dbReference type="GeneID" id="831021"/>
<dbReference type="Gramene" id="AT5G11490.1">
    <molecule id="Q9LDK9-1"/>
    <property type="protein sequence ID" value="AT5G11490.1"/>
    <property type="gene ID" value="AT5G11490"/>
</dbReference>
<dbReference type="KEGG" id="ath:AT5G11490"/>
<dbReference type="Araport" id="AT5G11490"/>
<dbReference type="TAIR" id="AT5G11490">
    <property type="gene designation" value="AP4B"/>
</dbReference>
<dbReference type="eggNOG" id="KOG1061">
    <property type="taxonomic scope" value="Eukaryota"/>
</dbReference>
<dbReference type="HOGENOM" id="CLU_006320_4_5_1"/>
<dbReference type="InParanoid" id="Q9LDK9"/>
<dbReference type="OMA" id="ANCMHAL"/>
<dbReference type="PhylomeDB" id="Q9LDK9"/>
<dbReference type="PRO" id="PR:Q9LDK9"/>
<dbReference type="Proteomes" id="UP000006548">
    <property type="component" value="Chromosome 5"/>
</dbReference>
<dbReference type="ExpressionAtlas" id="Q9LDK9">
    <property type="expression patterns" value="baseline and differential"/>
</dbReference>
<dbReference type="GO" id="GO:0030131">
    <property type="term" value="C:clathrin adaptor complex"/>
    <property type="evidence" value="ECO:0007669"/>
    <property type="project" value="InterPro"/>
</dbReference>
<dbReference type="GO" id="GO:0030665">
    <property type="term" value="C:clathrin-coated vesicle membrane"/>
    <property type="evidence" value="ECO:0007669"/>
    <property type="project" value="UniProtKB-SubCell"/>
</dbReference>
<dbReference type="GO" id="GO:0005794">
    <property type="term" value="C:Golgi apparatus"/>
    <property type="evidence" value="ECO:0007669"/>
    <property type="project" value="UniProtKB-SubCell"/>
</dbReference>
<dbReference type="GO" id="GO:0030276">
    <property type="term" value="F:clathrin binding"/>
    <property type="evidence" value="ECO:0007669"/>
    <property type="project" value="InterPro"/>
</dbReference>
<dbReference type="GO" id="GO:0043424">
    <property type="term" value="F:protein histidine kinase binding"/>
    <property type="evidence" value="ECO:0000353"/>
    <property type="project" value="UniProtKB"/>
</dbReference>
<dbReference type="GO" id="GO:0006886">
    <property type="term" value="P:intracellular protein transport"/>
    <property type="evidence" value="ECO:0007669"/>
    <property type="project" value="InterPro"/>
</dbReference>
<dbReference type="GO" id="GO:0016192">
    <property type="term" value="P:vesicle-mediated transport"/>
    <property type="evidence" value="ECO:0007669"/>
    <property type="project" value="InterPro"/>
</dbReference>
<dbReference type="FunFam" id="3.30.310.10:FF:000014">
    <property type="entry name" value="Beta-adaptin-like protein"/>
    <property type="match status" value="1"/>
</dbReference>
<dbReference type="FunFam" id="1.25.10.10:FF:000113">
    <property type="entry name" value="Beta-adaptin-like protein A"/>
    <property type="match status" value="1"/>
</dbReference>
<dbReference type="Gene3D" id="1.25.10.10">
    <property type="entry name" value="Leucine-rich Repeat Variant"/>
    <property type="match status" value="1"/>
</dbReference>
<dbReference type="Gene3D" id="3.30.310.10">
    <property type="entry name" value="TATA-Binding Protein"/>
    <property type="match status" value="1"/>
</dbReference>
<dbReference type="InterPro" id="IPR026739">
    <property type="entry name" value="AP_beta"/>
</dbReference>
<dbReference type="InterPro" id="IPR016342">
    <property type="entry name" value="AP_complex_bsu_1_2_4"/>
</dbReference>
<dbReference type="InterPro" id="IPR011989">
    <property type="entry name" value="ARM-like"/>
</dbReference>
<dbReference type="InterPro" id="IPR016024">
    <property type="entry name" value="ARM-type_fold"/>
</dbReference>
<dbReference type="InterPro" id="IPR015151">
    <property type="entry name" value="B-adaptin_app_sub_C"/>
</dbReference>
<dbReference type="InterPro" id="IPR002553">
    <property type="entry name" value="Clathrin/coatomer_adapt-like_N"/>
</dbReference>
<dbReference type="InterPro" id="IPR012295">
    <property type="entry name" value="TBP_dom_sf"/>
</dbReference>
<dbReference type="PANTHER" id="PTHR11134">
    <property type="entry name" value="ADAPTOR COMPLEX SUBUNIT BETA FAMILY MEMBER"/>
    <property type="match status" value="1"/>
</dbReference>
<dbReference type="Pfam" id="PF01602">
    <property type="entry name" value="Adaptin_N"/>
    <property type="match status" value="1"/>
</dbReference>
<dbReference type="Pfam" id="PF09066">
    <property type="entry name" value="B2-adapt-app_C"/>
    <property type="match status" value="1"/>
</dbReference>
<dbReference type="PIRSF" id="PIRSF002291">
    <property type="entry name" value="AP_complex_beta"/>
    <property type="match status" value="1"/>
</dbReference>
<dbReference type="SMART" id="SM01020">
    <property type="entry name" value="B2-adapt-app_C"/>
    <property type="match status" value="1"/>
</dbReference>
<dbReference type="SUPFAM" id="SSF48371">
    <property type="entry name" value="ARM repeat"/>
    <property type="match status" value="1"/>
</dbReference>
<protein>
    <recommendedName>
        <fullName>Beta-adaptin-like protein A</fullName>
        <shortName>At-bA-Ad</shortName>
        <shortName>At-betaA-Ad</shortName>
    </recommendedName>
    <alternativeName>
        <fullName>AP complex subunit beta-A</fullName>
    </alternativeName>
    <alternativeName>
        <fullName>Adaptor protein complex AP subunit beta-A</fullName>
    </alternativeName>
    <alternativeName>
        <fullName>Beta-adaptin A</fullName>
    </alternativeName>
    <alternativeName>
        <fullName>Clathrin assembly protein complex beta large chain A</fullName>
    </alternativeName>
</protein>
<sequence>MAPPAASQRYPSPSQPSGKSEVSDLKTQLRQLAGSRAPGVDDSKRDLYKKVISYMTIGIDVSSVFGEMVMCSATSDIVLKKMCYLYVGNYAKGNPDLSLLTINFLQRDCKDEDPMIRGLALRSLCSLRVPNLVEYLVGPLGSGLKDNNSYVRTIAVTGVLKLYHISPSTCIDADFPATLKSLMLHDSDAQVVANCLSALQEIWSLEASHSEEACREKESLLSKPVIYYFLNRIKEFNEWAQCLILELAVKYVPSDSNDIFDIMNLLEDRLQHANGAVVLATVKVFLQLTLSMTDVHQQVYERIKSPLLTLVSSGSPEQSYAILSHLHLLVVRAPFIFAADYKHFYCQYNEPSYVKKLKLEMLTAVANESNTYEIVTELCEYAANVDIAIARESIRAVGKIALQQYDVNAIVDRLLQFLEMEKDYVTAETLVLVKDLLRKYPQWSHDCISVVGGISSKNIQEPKAKAALIWMLGEYAQDMSDAPYVLENLIENWEEEHSAEVRLHLLTAAMKCFFKRAPETQKALGTALAAGIADFHQDVHDRALFYYRVLQYDVHVAERVVSPPKQAVSVFADTQSSEIKDRVFDEFNSLSVIYQKPSYMFTDKEHRGPFEFSDEVGNISITPEASSDIVPAQQYEANDKDLLLGIDEKDENKGVSNNNGSAYTAPSLESSSNITSQMQELAISGPATSATTPQSFGFDDLFGLGLSTAPAPTPSPPLLKLNARAALDPGAFQQKWRQLPISLTQECSVNPQGIAALTVPQSLIKHMQSHSIHCIASGGQSPNFKFFFFAQKESEPSNYLTECIINTSSAKAQIKVKADEQSTCQAFTTVFETALSKFGMP</sequence>
<keyword id="KW-0025">Alternative splicing</keyword>
<keyword id="KW-0968">Cytoplasmic vesicle</keyword>
<keyword id="KW-0333">Golgi apparatus</keyword>
<keyword id="KW-0472">Membrane</keyword>
<keyword id="KW-0653">Protein transport</keyword>
<keyword id="KW-1185">Reference proteome</keyword>
<keyword id="KW-0813">Transport</keyword>
<comment type="function">
    <text evidence="1">Subunit of clathrin-associated adaptor protein complex that plays a role in protein sorting in the late-Golgi/trans-Golgi network (TGN) and/or endosomes. The AP complexes mediate both the recruitment of clathrin to membranes and the recognition of sorting signals within the cytosolic tails of transmembrane cargo molecules (By similarity).</text>
</comment>
<comment type="subunit">
    <text evidence="1 3">Adaptor protein complexes are heterotetramers composed of two large adaptins (beta-type subunit and alpha-type or delta-type or epsilon-type or gamma-type subunit), a medium adaptin (mu-type subunit) and a small adaptin (sigma-type subunit) (By similarity). Interacts with AHK2.</text>
</comment>
<comment type="subcellular location">
    <subcellularLocation>
        <location evidence="1">Golgi apparatus</location>
    </subcellularLocation>
    <subcellularLocation>
        <location evidence="1">Golgi apparatus</location>
        <location evidence="1">trans-Golgi network</location>
    </subcellularLocation>
    <subcellularLocation>
        <location evidence="1">Cytoplasmic vesicle</location>
        <location evidence="1">Clathrin-coated vesicle membrane</location>
        <topology evidence="1">Peripheral membrane protein</topology>
        <orientation evidence="1">Cytoplasmic side</orientation>
    </subcellularLocation>
    <text evidence="1">Associated with the trans-Golgi network. Component of the coat surrounding the cytoplasmic face of coated vesicles located at the Golgi complex (By similarity).</text>
</comment>
<comment type="alternative products">
    <event type="alternative splicing"/>
    <isoform>
        <id>Q9LDK9-1</id>
        <name>1</name>
        <sequence type="displayed"/>
    </isoform>
    <text>A number of isoforms are produced. According to EST sequences.</text>
</comment>
<comment type="similarity">
    <text evidence="4">Belongs to the adaptor complexes large subunit family.</text>
</comment>
<feature type="chain" id="PRO_0000397848" description="Beta-adaptin-like protein A">
    <location>
        <begin position="1"/>
        <end position="841"/>
    </location>
</feature>
<feature type="region of interest" description="Disordered" evidence="2">
    <location>
        <begin position="1"/>
        <end position="25"/>
    </location>
</feature>
<feature type="region of interest" description="Disordered" evidence="2">
    <location>
        <begin position="650"/>
        <end position="671"/>
    </location>
</feature>
<feature type="compositionally biased region" description="Polar residues" evidence="2">
    <location>
        <begin position="9"/>
        <end position="25"/>
    </location>
</feature>
<feature type="compositionally biased region" description="Polar residues" evidence="2">
    <location>
        <begin position="654"/>
        <end position="671"/>
    </location>
</feature>
<reference key="1">
    <citation type="online journal article" date="2000" name="Plant Gene Register">
        <title>Isolation of clathrin-coated vesicle beta-adaptin homologs from Arabidopsis thaliana.</title>
        <authorList>
            <person name="Holstein S.E.H."/>
            <person name="Happel N."/>
        </authorList>
        <locator>PGR00-028</locator>
    </citation>
    <scope>NUCLEOTIDE SEQUENCE [MRNA]</scope>
    <source>
        <strain>cv. Columbia</strain>
    </source>
</reference>
<reference key="2">
    <citation type="journal article" date="2000" name="Nature">
        <title>Sequence and analysis of chromosome 5 of the plant Arabidopsis thaliana.</title>
        <authorList>
            <person name="Tabata S."/>
            <person name="Kaneko T."/>
            <person name="Nakamura Y."/>
            <person name="Kotani H."/>
            <person name="Kato T."/>
            <person name="Asamizu E."/>
            <person name="Miyajima N."/>
            <person name="Sasamoto S."/>
            <person name="Kimura T."/>
            <person name="Hosouchi T."/>
            <person name="Kawashima K."/>
            <person name="Kohara M."/>
            <person name="Matsumoto M."/>
            <person name="Matsuno A."/>
            <person name="Muraki A."/>
            <person name="Nakayama S."/>
            <person name="Nakazaki N."/>
            <person name="Naruo K."/>
            <person name="Okumura S."/>
            <person name="Shinpo S."/>
            <person name="Takeuchi C."/>
            <person name="Wada T."/>
            <person name="Watanabe A."/>
            <person name="Yamada M."/>
            <person name="Yasuda M."/>
            <person name="Sato S."/>
            <person name="de la Bastide M."/>
            <person name="Huang E."/>
            <person name="Spiegel L."/>
            <person name="Gnoj L."/>
            <person name="O'Shaughnessy A."/>
            <person name="Preston R."/>
            <person name="Habermann K."/>
            <person name="Murray J."/>
            <person name="Johnson D."/>
            <person name="Rohlfing T."/>
            <person name="Nelson J."/>
            <person name="Stoneking T."/>
            <person name="Pepin K."/>
            <person name="Spieth J."/>
            <person name="Sekhon M."/>
            <person name="Armstrong J."/>
            <person name="Becker M."/>
            <person name="Belter E."/>
            <person name="Cordum H."/>
            <person name="Cordes M."/>
            <person name="Courtney L."/>
            <person name="Courtney W."/>
            <person name="Dante M."/>
            <person name="Du H."/>
            <person name="Edwards J."/>
            <person name="Fryman J."/>
            <person name="Haakensen B."/>
            <person name="Lamar E."/>
            <person name="Latreille P."/>
            <person name="Leonard S."/>
            <person name="Meyer R."/>
            <person name="Mulvaney E."/>
            <person name="Ozersky P."/>
            <person name="Riley A."/>
            <person name="Strowmatt C."/>
            <person name="Wagner-McPherson C."/>
            <person name="Wollam A."/>
            <person name="Yoakum M."/>
            <person name="Bell M."/>
            <person name="Dedhia N."/>
            <person name="Parnell L."/>
            <person name="Shah R."/>
            <person name="Rodriguez M."/>
            <person name="Hoon See L."/>
            <person name="Vil D."/>
            <person name="Baker J."/>
            <person name="Kirchoff K."/>
            <person name="Toth K."/>
            <person name="King L."/>
            <person name="Bahret A."/>
            <person name="Miller B."/>
            <person name="Marra M.A."/>
            <person name="Martienssen R."/>
            <person name="McCombie W.R."/>
            <person name="Wilson R.K."/>
            <person name="Murphy G."/>
            <person name="Bancroft I."/>
            <person name="Volckaert G."/>
            <person name="Wambutt R."/>
            <person name="Duesterhoeft A."/>
            <person name="Stiekema W."/>
            <person name="Pohl T."/>
            <person name="Entian K.-D."/>
            <person name="Terryn N."/>
            <person name="Hartley N."/>
            <person name="Bent E."/>
            <person name="Johnson S."/>
            <person name="Langham S.-A."/>
            <person name="McCullagh B."/>
            <person name="Robben J."/>
            <person name="Grymonprez B."/>
            <person name="Zimmermann W."/>
            <person name="Ramsperger U."/>
            <person name="Wedler H."/>
            <person name="Balke K."/>
            <person name="Wedler E."/>
            <person name="Peters S."/>
            <person name="van Staveren M."/>
            <person name="Dirkse W."/>
            <person name="Mooijman P."/>
            <person name="Klein Lankhorst R."/>
            <person name="Weitzenegger T."/>
            <person name="Bothe G."/>
            <person name="Rose M."/>
            <person name="Hauf J."/>
            <person name="Berneiser S."/>
            <person name="Hempel S."/>
            <person name="Feldpausch M."/>
            <person name="Lamberth S."/>
            <person name="Villarroel R."/>
            <person name="Gielen J."/>
            <person name="Ardiles W."/>
            <person name="Bents O."/>
            <person name="Lemcke K."/>
            <person name="Kolesov G."/>
            <person name="Mayer K.F.X."/>
            <person name="Rudd S."/>
            <person name="Schoof H."/>
            <person name="Schueller C."/>
            <person name="Zaccaria P."/>
            <person name="Mewes H.-W."/>
            <person name="Bevan M."/>
            <person name="Fransz P.F."/>
        </authorList>
    </citation>
    <scope>NUCLEOTIDE SEQUENCE [LARGE SCALE GENOMIC DNA]</scope>
    <source>
        <strain>cv. Columbia</strain>
    </source>
</reference>
<reference key="3">
    <citation type="journal article" date="2017" name="Plant J.">
        <title>Araport11: a complete reannotation of the Arabidopsis thaliana reference genome.</title>
        <authorList>
            <person name="Cheng C.Y."/>
            <person name="Krishnakumar V."/>
            <person name="Chan A.P."/>
            <person name="Thibaud-Nissen F."/>
            <person name="Schobel S."/>
            <person name="Town C.D."/>
        </authorList>
    </citation>
    <scope>GENOME REANNOTATION</scope>
    <source>
        <strain>cv. Columbia</strain>
    </source>
</reference>
<reference key="4">
    <citation type="journal article" date="2001" name="Mol. Biol. Cell">
        <title>Adaptins: the final recount.</title>
        <authorList>
            <person name="Boehm M."/>
            <person name="Bonifacino J.S."/>
        </authorList>
    </citation>
    <scope>GENE FAMILY</scope>
    <scope>REVIEW</scope>
</reference>
<reference key="5">
    <citation type="journal article" date="2008" name="J. Proteome Res.">
        <title>Toward an interaction map of the two-component signaling pathway of Arabidopsis thaliana.</title>
        <authorList>
            <person name="Dortay H."/>
            <person name="Gruhn N."/>
            <person name="Pfeifer A."/>
            <person name="Schwerdtner M."/>
            <person name="Schmuelling T."/>
            <person name="Heyl A."/>
        </authorList>
    </citation>
    <scope>INTERACTION WITH AHK2</scope>
</reference>
<evidence type="ECO:0000250" key="1"/>
<evidence type="ECO:0000256" key="2">
    <source>
        <dbReference type="SAM" id="MobiDB-lite"/>
    </source>
</evidence>
<evidence type="ECO:0000269" key="3">
    <source>
    </source>
</evidence>
<evidence type="ECO:0000305" key="4"/>
<gene>
    <name type="primary">BETAA-AD</name>
    <name type="ordered locus">At5g11490</name>
    <name type="ORF">F15N18.80</name>
</gene>
<organism>
    <name type="scientific">Arabidopsis thaliana</name>
    <name type="common">Mouse-ear cress</name>
    <dbReference type="NCBI Taxonomy" id="3702"/>
    <lineage>
        <taxon>Eukaryota</taxon>
        <taxon>Viridiplantae</taxon>
        <taxon>Streptophyta</taxon>
        <taxon>Embryophyta</taxon>
        <taxon>Tracheophyta</taxon>
        <taxon>Spermatophyta</taxon>
        <taxon>Magnoliopsida</taxon>
        <taxon>eudicotyledons</taxon>
        <taxon>Gunneridae</taxon>
        <taxon>Pentapetalae</taxon>
        <taxon>rosids</taxon>
        <taxon>malvids</taxon>
        <taxon>Brassicales</taxon>
        <taxon>Brassicaceae</taxon>
        <taxon>Camelineae</taxon>
        <taxon>Arabidopsis</taxon>
    </lineage>
</organism>
<name>APBLA_ARATH</name>
<proteinExistence type="evidence at protein level"/>